<sequence>MAGRPAVSASSRWLEGIRKWYYNAAGFNKLGLMRDDTIHENDDVKEAIRRLPENLYNDRVFRIKRALDLSMRQQILPKEQWTKYEEDKSYLEPYLKEVIRERKEREEWAKK</sequence>
<feature type="initiator methionine" description="Removed" evidence="4">
    <location>
        <position position="1"/>
    </location>
</feature>
<feature type="chain" id="PRO_0000193523" description="Cytochrome b-c1 complex subunit 7">
    <location>
        <begin position="2"/>
        <end position="111"/>
    </location>
</feature>
<feature type="modified residue" description="N-acetylalanine" evidence="4">
    <location>
        <position position="2"/>
    </location>
</feature>
<feature type="modified residue" description="N6-acetyllysine" evidence="2">
    <location>
        <position position="19"/>
    </location>
</feature>
<feature type="modified residue" description="N6-acetyllysine; alternate" evidence="2">
    <location>
        <position position="78"/>
    </location>
</feature>
<feature type="modified residue" description="N6-succinyllysine; alternate" evidence="2">
    <location>
        <position position="78"/>
    </location>
</feature>
<feature type="modified residue" description="N6-acetyllysine" evidence="2">
    <location>
        <position position="83"/>
    </location>
</feature>
<feature type="modified residue" description="N6-acetyllysine; alternate" evidence="2">
    <location>
        <position position="88"/>
    </location>
</feature>
<feature type="modified residue" description="N6-succinyllysine; alternate" evidence="2">
    <location>
        <position position="88"/>
    </location>
</feature>
<feature type="modified residue" description="N6-acetyllysine" evidence="2">
    <location>
        <position position="96"/>
    </location>
</feature>
<feature type="sequence conflict" description="In Ref. 2; AA sequence." evidence="6" ref="2">
    <original>N</original>
    <variation>D</variation>
    <location>
        <position position="57"/>
    </location>
</feature>
<feature type="strand" evidence="10">
    <location>
        <begin position="5"/>
        <end position="8"/>
    </location>
</feature>
<feature type="turn" evidence="9">
    <location>
        <begin position="9"/>
        <end position="13"/>
    </location>
</feature>
<feature type="helix" evidence="8">
    <location>
        <begin position="14"/>
        <end position="25"/>
    </location>
</feature>
<feature type="helix" evidence="8">
    <location>
        <begin position="27"/>
        <end position="30"/>
    </location>
</feature>
<feature type="helix" evidence="8">
    <location>
        <begin position="34"/>
        <end position="37"/>
    </location>
</feature>
<feature type="helix" evidence="8">
    <location>
        <begin position="42"/>
        <end position="49"/>
    </location>
</feature>
<feature type="helix" evidence="8">
    <location>
        <begin position="53"/>
        <end position="71"/>
    </location>
</feature>
<feature type="helix" evidence="8">
    <location>
        <begin position="78"/>
        <end position="80"/>
    </location>
</feature>
<feature type="helix" evidence="8">
    <location>
        <begin position="84"/>
        <end position="86"/>
    </location>
</feature>
<feature type="helix" evidence="8">
    <location>
        <begin position="92"/>
        <end position="110"/>
    </location>
</feature>
<dbReference type="EMBL" id="BC103057">
    <property type="protein sequence ID" value="AAI03058.1"/>
    <property type="molecule type" value="mRNA"/>
</dbReference>
<dbReference type="PIR" id="A00122">
    <property type="entry name" value="UYBO"/>
</dbReference>
<dbReference type="RefSeq" id="NP_001029969.1">
    <property type="nucleotide sequence ID" value="NM_001034797.2"/>
</dbReference>
<dbReference type="PDB" id="1BCC">
    <property type="method" value="X-ray"/>
    <property type="resolution" value="3.16 A"/>
    <property type="chains" value="F=2-108"/>
</dbReference>
<dbReference type="PDB" id="1BE3">
    <property type="method" value="X-ray"/>
    <property type="resolution" value="3.00 A"/>
    <property type="chains" value="F=2-111"/>
</dbReference>
<dbReference type="PDB" id="1BGY">
    <property type="method" value="X-ray"/>
    <property type="resolution" value="3.00 A"/>
    <property type="chains" value="F/R=2-111"/>
</dbReference>
<dbReference type="PDB" id="1L0L">
    <property type="method" value="X-ray"/>
    <property type="resolution" value="2.35 A"/>
    <property type="chains" value="F=2-111"/>
</dbReference>
<dbReference type="PDB" id="1L0N">
    <property type="method" value="X-ray"/>
    <property type="resolution" value="2.60 A"/>
    <property type="chains" value="F=2-111"/>
</dbReference>
<dbReference type="PDB" id="1NTK">
    <property type="method" value="X-ray"/>
    <property type="resolution" value="2.60 A"/>
    <property type="chains" value="F=2-111"/>
</dbReference>
<dbReference type="PDB" id="1NTM">
    <property type="method" value="X-ray"/>
    <property type="resolution" value="2.40 A"/>
    <property type="chains" value="F=2-111"/>
</dbReference>
<dbReference type="PDB" id="1NTZ">
    <property type="method" value="X-ray"/>
    <property type="resolution" value="2.60 A"/>
    <property type="chains" value="F=2-111"/>
</dbReference>
<dbReference type="PDB" id="1NU1">
    <property type="method" value="X-ray"/>
    <property type="resolution" value="3.20 A"/>
    <property type="chains" value="F=2-111"/>
</dbReference>
<dbReference type="PDB" id="1PP9">
    <property type="method" value="X-ray"/>
    <property type="resolution" value="2.10 A"/>
    <property type="chains" value="F/S=2-111"/>
</dbReference>
<dbReference type="PDB" id="1PPJ">
    <property type="method" value="X-ray"/>
    <property type="resolution" value="2.10 A"/>
    <property type="chains" value="F/S=2-111"/>
</dbReference>
<dbReference type="PDB" id="1QCR">
    <property type="method" value="X-ray"/>
    <property type="resolution" value="2.70 A"/>
    <property type="chains" value="F=9-111"/>
</dbReference>
<dbReference type="PDB" id="1SQB">
    <property type="method" value="X-ray"/>
    <property type="resolution" value="2.69 A"/>
    <property type="chains" value="F=2-111"/>
</dbReference>
<dbReference type="PDB" id="1SQP">
    <property type="method" value="X-ray"/>
    <property type="resolution" value="2.70 A"/>
    <property type="chains" value="F=2-111"/>
</dbReference>
<dbReference type="PDB" id="1SQQ">
    <property type="method" value="X-ray"/>
    <property type="resolution" value="3.00 A"/>
    <property type="chains" value="F=2-111"/>
</dbReference>
<dbReference type="PDB" id="1SQV">
    <property type="method" value="X-ray"/>
    <property type="resolution" value="2.85 A"/>
    <property type="chains" value="F=2-111"/>
</dbReference>
<dbReference type="PDB" id="1SQX">
    <property type="method" value="X-ray"/>
    <property type="resolution" value="2.60 A"/>
    <property type="chains" value="F=2-111"/>
</dbReference>
<dbReference type="PDB" id="2A06">
    <property type="method" value="X-ray"/>
    <property type="resolution" value="2.10 A"/>
    <property type="chains" value="F/S=2-111"/>
</dbReference>
<dbReference type="PDB" id="2BCC">
    <property type="method" value="X-ray"/>
    <property type="resolution" value="3.50 A"/>
    <property type="chains" value="F=2-108"/>
</dbReference>
<dbReference type="PDB" id="2FYU">
    <property type="method" value="X-ray"/>
    <property type="resolution" value="2.26 A"/>
    <property type="chains" value="F=2-111"/>
</dbReference>
<dbReference type="PDB" id="2YBB">
    <property type="method" value="EM"/>
    <property type="resolution" value="19.00 A"/>
    <property type="chains" value="F/f=2-111"/>
</dbReference>
<dbReference type="PDB" id="3BCC">
    <property type="method" value="X-ray"/>
    <property type="resolution" value="3.70 A"/>
    <property type="chains" value="F=2-108"/>
</dbReference>
<dbReference type="PDB" id="4D6T">
    <property type="method" value="X-ray"/>
    <property type="resolution" value="3.57 A"/>
    <property type="chains" value="F/S=1-111"/>
</dbReference>
<dbReference type="PDB" id="4D6U">
    <property type="method" value="X-ray"/>
    <property type="resolution" value="4.09 A"/>
    <property type="chains" value="F/S=1-111"/>
</dbReference>
<dbReference type="PDB" id="5KLV">
    <property type="method" value="X-ray"/>
    <property type="resolution" value="2.65 A"/>
    <property type="chains" value="F=2-111"/>
</dbReference>
<dbReference type="PDB" id="5LUF">
    <property type="method" value="EM"/>
    <property type="resolution" value="9.10 A"/>
    <property type="chains" value="f/r=2-111"/>
</dbReference>
<dbReference type="PDB" id="5NMI">
    <property type="method" value="X-ray"/>
    <property type="resolution" value="3.50 A"/>
    <property type="chains" value="F/S=1-111"/>
</dbReference>
<dbReference type="PDB" id="5OKD">
    <property type="method" value="X-ray"/>
    <property type="resolution" value="3.10 A"/>
    <property type="chains" value="F=1-111"/>
</dbReference>
<dbReference type="PDB" id="6FO0">
    <property type="method" value="EM"/>
    <property type="resolution" value="4.10 A"/>
    <property type="chains" value="F/S=1-111"/>
</dbReference>
<dbReference type="PDB" id="6FO2">
    <property type="method" value="EM"/>
    <property type="resolution" value="4.40 A"/>
    <property type="chains" value="F/S=1-111"/>
</dbReference>
<dbReference type="PDB" id="6FO6">
    <property type="method" value="EM"/>
    <property type="resolution" value="4.10 A"/>
    <property type="chains" value="F/S=1-111"/>
</dbReference>
<dbReference type="PDB" id="6HAW">
    <property type="method" value="X-ray"/>
    <property type="resolution" value="3.45 A"/>
    <property type="chains" value="F=12-110"/>
</dbReference>
<dbReference type="PDB" id="6NHG">
    <property type="method" value="X-ray"/>
    <property type="resolution" value="2.80 A"/>
    <property type="chains" value="F=2-111"/>
</dbReference>
<dbReference type="PDB" id="6XVF">
    <property type="method" value="X-ray"/>
    <property type="resolution" value="3.50 A"/>
    <property type="chains" value="F=12-111"/>
</dbReference>
<dbReference type="PDB" id="6ZFS">
    <property type="method" value="X-ray"/>
    <property type="resolution" value="3.50 A"/>
    <property type="chains" value="F=12-110"/>
</dbReference>
<dbReference type="PDB" id="6ZFT">
    <property type="method" value="X-ray"/>
    <property type="resolution" value="3.30 A"/>
    <property type="chains" value="F=12-110"/>
</dbReference>
<dbReference type="PDB" id="6ZFU">
    <property type="method" value="X-ray"/>
    <property type="resolution" value="3.50 A"/>
    <property type="chains" value="F=12-110"/>
</dbReference>
<dbReference type="PDB" id="7DGQ">
    <property type="method" value="EM"/>
    <property type="resolution" value="5.00 A"/>
    <property type="chains" value="A2/q=1-111"/>
</dbReference>
<dbReference type="PDB" id="7DGR">
    <property type="method" value="EM"/>
    <property type="resolution" value="4.60 A"/>
    <property type="chains" value="A1/q=1-111"/>
</dbReference>
<dbReference type="PDB" id="7DGS">
    <property type="method" value="EM"/>
    <property type="resolution" value="7.80 A"/>
    <property type="chains" value="A1/q=1-111"/>
</dbReference>
<dbReference type="PDB" id="7DKF">
    <property type="method" value="EM"/>
    <property type="resolution" value="8.30 A"/>
    <property type="chains" value="F1/R1=1-111"/>
</dbReference>
<dbReference type="PDB" id="7R3V">
    <property type="method" value="X-ray"/>
    <property type="resolution" value="3.20 A"/>
    <property type="chains" value="F=12-110"/>
</dbReference>
<dbReference type="PDB" id="7TAY">
    <property type="method" value="X-ray"/>
    <property type="resolution" value="2.95 A"/>
    <property type="chains" value="F=2-111"/>
</dbReference>
<dbReference type="PDB" id="7TZ6">
    <property type="method" value="EM"/>
    <property type="resolution" value="2.88 A"/>
    <property type="chains" value="F/S=2-111"/>
</dbReference>
<dbReference type="PDB" id="8P65">
    <property type="method" value="EM"/>
    <property type="resolution" value="3.00 A"/>
    <property type="chains" value="F/S=1-111"/>
</dbReference>
<dbReference type="PDB" id="9GCX">
    <property type="method" value="X-ray"/>
    <property type="resolution" value="3.52 A"/>
    <property type="chains" value="F=1-111"/>
</dbReference>
<dbReference type="PDBsum" id="1BCC"/>
<dbReference type="PDBsum" id="1BE3"/>
<dbReference type="PDBsum" id="1BGY"/>
<dbReference type="PDBsum" id="1L0L"/>
<dbReference type="PDBsum" id="1L0N"/>
<dbReference type="PDBsum" id="1NTK"/>
<dbReference type="PDBsum" id="1NTM"/>
<dbReference type="PDBsum" id="1NTZ"/>
<dbReference type="PDBsum" id="1NU1"/>
<dbReference type="PDBsum" id="1PP9"/>
<dbReference type="PDBsum" id="1PPJ"/>
<dbReference type="PDBsum" id="1QCR"/>
<dbReference type="PDBsum" id="1SQB"/>
<dbReference type="PDBsum" id="1SQP"/>
<dbReference type="PDBsum" id="1SQQ"/>
<dbReference type="PDBsum" id="1SQV"/>
<dbReference type="PDBsum" id="1SQX"/>
<dbReference type="PDBsum" id="2A06"/>
<dbReference type="PDBsum" id="2BCC"/>
<dbReference type="PDBsum" id="2FYU"/>
<dbReference type="PDBsum" id="2YBB"/>
<dbReference type="PDBsum" id="3BCC"/>
<dbReference type="PDBsum" id="4D6T"/>
<dbReference type="PDBsum" id="4D6U"/>
<dbReference type="PDBsum" id="5KLV"/>
<dbReference type="PDBsum" id="5LUF"/>
<dbReference type="PDBsum" id="5NMI"/>
<dbReference type="PDBsum" id="5OKD"/>
<dbReference type="PDBsum" id="6FO0"/>
<dbReference type="PDBsum" id="6FO2"/>
<dbReference type="PDBsum" id="6FO6"/>
<dbReference type="PDBsum" id="6HAW"/>
<dbReference type="PDBsum" id="6NHG"/>
<dbReference type="PDBsum" id="6XVF"/>
<dbReference type="PDBsum" id="6ZFS"/>
<dbReference type="PDBsum" id="6ZFT"/>
<dbReference type="PDBsum" id="6ZFU"/>
<dbReference type="PDBsum" id="7DGQ"/>
<dbReference type="PDBsum" id="7DGR"/>
<dbReference type="PDBsum" id="7DGS"/>
<dbReference type="PDBsum" id="7DKF"/>
<dbReference type="PDBsum" id="7R3V"/>
<dbReference type="PDBsum" id="7TAY"/>
<dbReference type="PDBsum" id="7TZ6"/>
<dbReference type="PDBsum" id="8P65"/>
<dbReference type="PDBsum" id="9GCX"/>
<dbReference type="EMDB" id="EMD-17461"/>
<dbReference type="EMDB" id="EMD-26203"/>
<dbReference type="EMDB" id="EMD-30673"/>
<dbReference type="EMDB" id="EMD-4107"/>
<dbReference type="EMDB" id="EMD-4286"/>
<dbReference type="EMDB" id="EMD-4288"/>
<dbReference type="EMDB" id="EMD-4292"/>
<dbReference type="SMR" id="P00129"/>
<dbReference type="CORUM" id="P00129"/>
<dbReference type="DIP" id="DIP-1082N"/>
<dbReference type="FunCoup" id="P00129">
    <property type="interactions" value="1364"/>
</dbReference>
<dbReference type="IntAct" id="P00129">
    <property type="interactions" value="3"/>
</dbReference>
<dbReference type="STRING" id="9913.ENSBTAP00000001993"/>
<dbReference type="GlyGen" id="P00129">
    <property type="glycosylation" value="1 site, 1 O-linked glycan (1 site)"/>
</dbReference>
<dbReference type="iPTMnet" id="P00129"/>
<dbReference type="PaxDb" id="9913-ENSBTAP00000001993"/>
<dbReference type="Ensembl" id="ENSBTAT00000001993.3">
    <property type="protein sequence ID" value="ENSBTAP00000001993.2"/>
    <property type="gene ID" value="ENSBTAG00000001521.4"/>
</dbReference>
<dbReference type="GeneID" id="616871"/>
<dbReference type="KEGG" id="bta:616871"/>
<dbReference type="CTD" id="7381"/>
<dbReference type="VEuPathDB" id="HostDB:ENSBTAG00000001521"/>
<dbReference type="VGNC" id="VGNC:36694">
    <property type="gene designation" value="UQCRB"/>
</dbReference>
<dbReference type="eggNOG" id="KOG3440">
    <property type="taxonomic scope" value="Eukaryota"/>
</dbReference>
<dbReference type="GeneTree" id="ENSGT00390000012916"/>
<dbReference type="HOGENOM" id="CLU_115154_2_0_1"/>
<dbReference type="InParanoid" id="P00129"/>
<dbReference type="OMA" id="AGFNKLX"/>
<dbReference type="OrthoDB" id="425749at2759"/>
<dbReference type="TreeFam" id="TF105035"/>
<dbReference type="Reactome" id="R-BTA-611105">
    <property type="pathway name" value="Respiratory electron transport"/>
</dbReference>
<dbReference type="Reactome" id="R-BTA-9865881">
    <property type="pathway name" value="Complex III assembly"/>
</dbReference>
<dbReference type="EvolutionaryTrace" id="P00129"/>
<dbReference type="Proteomes" id="UP000009136">
    <property type="component" value="Chromosome 14"/>
</dbReference>
<dbReference type="Bgee" id="ENSBTAG00000001521">
    <property type="expression patterns" value="Expressed in cardiac ventricle and 105 other cell types or tissues"/>
</dbReference>
<dbReference type="GO" id="GO:0005743">
    <property type="term" value="C:mitochondrial inner membrane"/>
    <property type="evidence" value="ECO:0007669"/>
    <property type="project" value="UniProtKB-SubCell"/>
</dbReference>
<dbReference type="GO" id="GO:0045275">
    <property type="term" value="C:respiratory chain complex III"/>
    <property type="evidence" value="ECO:0000318"/>
    <property type="project" value="GO_Central"/>
</dbReference>
<dbReference type="GO" id="GO:0006122">
    <property type="term" value="P:mitochondrial electron transport, ubiquinol to cytochrome c"/>
    <property type="evidence" value="ECO:0000318"/>
    <property type="project" value="GO_Central"/>
</dbReference>
<dbReference type="FunFam" id="1.10.1090.10:FF:000001">
    <property type="entry name" value="Cytochrome b-c1 complex subunit 7"/>
    <property type="match status" value="1"/>
</dbReference>
<dbReference type="Gene3D" id="1.10.1090.10">
    <property type="entry name" value="Cytochrome b-c1 complex subunit 7"/>
    <property type="match status" value="1"/>
</dbReference>
<dbReference type="InterPro" id="IPR003197">
    <property type="entry name" value="QCR7"/>
</dbReference>
<dbReference type="InterPro" id="IPR036544">
    <property type="entry name" value="QCR7_sf"/>
</dbReference>
<dbReference type="PANTHER" id="PTHR12022:SF12">
    <property type="entry name" value="CYTOCHROME B-C1 COMPLEX SUBUNIT 7"/>
    <property type="match status" value="1"/>
</dbReference>
<dbReference type="PANTHER" id="PTHR12022">
    <property type="entry name" value="UBIQUINOL-CYTOCHROME C REDUCTASE COMPLEX 14 KD PROTEIN"/>
    <property type="match status" value="1"/>
</dbReference>
<dbReference type="Pfam" id="PF02271">
    <property type="entry name" value="UCR_14kD"/>
    <property type="match status" value="1"/>
</dbReference>
<dbReference type="PIRSF" id="PIRSF000022">
    <property type="entry name" value="Bc1_14K"/>
    <property type="match status" value="1"/>
</dbReference>
<dbReference type="SUPFAM" id="SSF81524">
    <property type="entry name" value="14 kDa protein of cytochrome bc1 complex (Ubiquinol-cytochrome c reductase)"/>
    <property type="match status" value="1"/>
</dbReference>
<comment type="function">
    <text evidence="1">Component of the ubiquinol-cytochrome c oxidoreductase, a multisubunit transmembrane complex that is part of the mitochondrial electron transport chain which drives oxidative phosphorylation. The respiratory chain contains 3 multisubunit complexes succinate dehydrogenase (complex II, CII), ubiquinol-cytochrome c oxidoreductase (cytochrome b-c1 complex, complex III, CIII) and cytochrome c oxidase (complex IV, CIV), that cooperate to transfer electrons derived from NADH and succinate to molecular oxygen, creating an electrochemical gradient over the inner membrane that drives transmembrane transport and the ATP synthase. The cytochrome b-c1 complex catalyzes electron transfer from ubiquinol to cytochrome c, linking this redox reaction to translocation of protons across the mitochondrial inner membrane, with protons being carried across the membrane as hydrogens on the quinol. In the process called Q cycle, 2 protons are consumed from the matrix, 4 protons are released into the intermembrane space and 2 electrons are passed to cytochrome c.</text>
</comment>
<comment type="subunit">
    <text evidence="3 5">Component of the ubiquinol-cytochrome c oxidoreductase (cytochrome b-c1 complex, complex III, CIII), a multisubunit enzyme composed of 11 subunits. The complex is composed of 3 respiratory subunits cytochrome b, cytochrome c1 and Rieske protein UQCRFS1, 2 core protein subunits UQCRC1/QCR1 and UQCRC2/QCR2, and 6 low-molecular weight protein subunits UQCRH/QCR6, UQCRB/QCR7, UQCRQ/QCR8, UQCR10/QCR9, UQCR11/QCR10 and subunit 9, the cleavage product of Rieske protein UQCRFS1 (PubMed:9651245). The complex exists as an obligatory dimer and forms supercomplexes (SCs) in the inner mitochondrial membrane with NADH-ubiquinone oxidoreductase (complex I, CI) and cytochrome c oxidase (complex IV, CIV), resulting in different assemblies (supercomplex SCI(1)III(2)IV(1) and megacomplex MCI(2)III(2)IV(2)) (PubMed:27830641).</text>
</comment>
<comment type="subcellular location">
    <subcellularLocation>
        <location evidence="1">Mitochondrion inner membrane</location>
        <topology evidence="1">Peripheral membrane protein</topology>
        <orientation evidence="1">Matrix side</orientation>
    </subcellularLocation>
</comment>
<comment type="similarity">
    <text evidence="6">Belongs to the UQCRB/QCR7 family.</text>
</comment>
<comment type="caution">
    <text evidence="7">Was originally thought to be the ubiquinone-binding protein (QP-C).</text>
</comment>
<protein>
    <recommendedName>
        <fullName>Cytochrome b-c1 complex subunit 7</fullName>
    </recommendedName>
    <alternativeName>
        <fullName>Complex III subunit 7</fullName>
    </alternativeName>
    <alternativeName>
        <fullName>Complex III subunit VII</fullName>
    </alternativeName>
    <alternativeName>
        <fullName>QP-C</fullName>
    </alternativeName>
    <alternativeName>
        <fullName>Ubiquinol-cytochrome c reductase complex 14 kDa protein</fullName>
    </alternativeName>
</protein>
<evidence type="ECO:0000250" key="1">
    <source>
        <dbReference type="UniProtKB" id="P00128"/>
    </source>
</evidence>
<evidence type="ECO:0000250" key="2">
    <source>
        <dbReference type="UniProtKB" id="Q9D855"/>
    </source>
</evidence>
<evidence type="ECO:0000269" key="3">
    <source>
    </source>
</evidence>
<evidence type="ECO:0000269" key="4">
    <source>
    </source>
</evidence>
<evidence type="ECO:0000269" key="5">
    <source>
    </source>
</evidence>
<evidence type="ECO:0000305" key="6"/>
<evidence type="ECO:0000305" key="7">
    <source>
    </source>
</evidence>
<evidence type="ECO:0007829" key="8">
    <source>
        <dbReference type="PDB" id="1PP9"/>
    </source>
</evidence>
<evidence type="ECO:0007829" key="9">
    <source>
        <dbReference type="PDB" id="1SQP"/>
    </source>
</evidence>
<evidence type="ECO:0007829" key="10">
    <source>
        <dbReference type="PDB" id="8P65"/>
    </source>
</evidence>
<keyword id="KW-0002">3D-structure</keyword>
<keyword id="KW-0007">Acetylation</keyword>
<keyword id="KW-0903">Direct protein sequencing</keyword>
<keyword id="KW-0249">Electron transport</keyword>
<keyword id="KW-0472">Membrane</keyword>
<keyword id="KW-0496">Mitochondrion</keyword>
<keyword id="KW-0999">Mitochondrion inner membrane</keyword>
<keyword id="KW-1185">Reference proteome</keyword>
<keyword id="KW-0679">Respiratory chain</keyword>
<keyword id="KW-0813">Transport</keyword>
<organism>
    <name type="scientific">Bos taurus</name>
    <name type="common">Bovine</name>
    <dbReference type="NCBI Taxonomy" id="9913"/>
    <lineage>
        <taxon>Eukaryota</taxon>
        <taxon>Metazoa</taxon>
        <taxon>Chordata</taxon>
        <taxon>Craniata</taxon>
        <taxon>Vertebrata</taxon>
        <taxon>Euteleostomi</taxon>
        <taxon>Mammalia</taxon>
        <taxon>Eutheria</taxon>
        <taxon>Laurasiatheria</taxon>
        <taxon>Artiodactyla</taxon>
        <taxon>Ruminantia</taxon>
        <taxon>Pecora</taxon>
        <taxon>Bovidae</taxon>
        <taxon>Bovinae</taxon>
        <taxon>Bos</taxon>
    </lineage>
</organism>
<gene>
    <name type="primary">UQCRB</name>
</gene>
<name>QCR7_BOVIN</name>
<accession>P00129</accession>
<accession>Q3SZ83</accession>
<proteinExistence type="evidence at protein level"/>
<reference key="1">
    <citation type="submission" date="2005-08" db="EMBL/GenBank/DDBJ databases">
        <authorList>
            <consortium name="NIH - Mammalian Gene Collection (MGC) project"/>
        </authorList>
    </citation>
    <scope>NUCLEOTIDE SEQUENCE [LARGE SCALE MRNA]</scope>
    <source>
        <strain>Hereford</strain>
        <tissue>Heart ventricle</tissue>
    </source>
</reference>
<reference key="2">
    <citation type="journal article" date="1985" name="J. Biol. Chem.">
        <title>Complete amino acid sequence of the ubiquinone binding protein (QP-C), a protein similar to the 14,000-dalton subunit of the yeast ubiquinol-cytochrome c reductase complex.</title>
        <authorList>
            <person name="Wakabayashi S."/>
            <person name="Takao T."/>
            <person name="Shimonishi Y."/>
            <person name="Kuramitsu S."/>
            <person name="Matsubara H."/>
            <person name="Wang T."/>
            <person name="Zhang Z."/>
            <person name="King T.E."/>
        </authorList>
    </citation>
    <scope>PROTEIN SEQUENCE OF 2-111</scope>
    <scope>ACETYLATION AT ALA-2</scope>
</reference>
<reference key="3">
    <citation type="journal article" date="1997" name="Science">
        <title>Crystal structure of the cytochrome bc1 complex from bovine heart mitochondria.</title>
        <authorList>
            <person name="Xia D."/>
            <person name="Yu C.A."/>
            <person name="Kim H."/>
            <person name="Xia J.Z."/>
            <person name="Kachurin A.M."/>
            <person name="Zhang L."/>
            <person name="Yu L."/>
            <person name="Deisenhofer J."/>
        </authorList>
    </citation>
    <scope>X-RAY CRYSTALLOGRAPHY (2.7 ANGSTROMS)</scope>
</reference>
<reference key="4">
    <citation type="journal article" date="1997" name="Science">
        <authorList>
            <person name="Xia D."/>
            <person name="Yu C.A."/>
            <person name="Kim H."/>
            <person name="Xia J.Z."/>
            <person name="Kachurin A.M."/>
            <person name="Zhang L."/>
            <person name="Yu L."/>
            <person name="Deisenhofer J."/>
        </authorList>
    </citation>
    <scope>ERRATUM OF PUBMED:9204897</scope>
</reference>
<reference key="5">
    <citation type="journal article" date="1998" name="Science">
        <title>Complete structure of the 11-subunit bovine mitochondrial cytochrome bc1 complex.</title>
        <authorList>
            <person name="Iwata S."/>
            <person name="Lee J.W."/>
            <person name="Okada K."/>
            <person name="Lee J.K."/>
            <person name="Iwata M."/>
            <person name="Rasmussen B."/>
            <person name="Link T.A."/>
            <person name="Ramaswamy S."/>
            <person name="Jap B.K."/>
        </authorList>
    </citation>
    <scope>X-RAY CRYSTALLOGRAPHY (3.0 ANGSTROMS)</scope>
</reference>
<reference key="6">
    <citation type="journal article" date="2002" name="Biochemistry">
        <title>The crystal structure of mitochondrial cytochrome bc1 in complex with famoxadone: the role of aromatic-aromatic interaction in inhibition.</title>
        <authorList>
            <person name="Gao X."/>
            <person name="Wen X."/>
            <person name="Yu C."/>
            <person name="Esser L."/>
            <person name="Tsao S."/>
            <person name="Quinn B."/>
            <person name="Zhang L."/>
            <person name="Yu L."/>
            <person name="Xia D."/>
        </authorList>
    </citation>
    <scope>X-RAY CRYSTALLOGRAPHY (2.35 ANGSTROMS)</scope>
</reference>
<reference key="7">
    <citation type="journal article" date="2004" name="J. Mol. Biol.">
        <title>Crystallographic studies of quinol oxidation site inhibitors: a modified classification of inhibitors for the cytochrome bc(1) complex.</title>
        <authorList>
            <person name="Esser L."/>
            <person name="Quinn B."/>
            <person name="Li Y.F."/>
            <person name="Zhang M."/>
            <person name="Elberry M."/>
            <person name="Yu L."/>
            <person name="Yu C.A."/>
            <person name="Xia D."/>
        </authorList>
    </citation>
    <scope>X-RAY CRYSTALLOGRAPHY (2.69 ANGSTROMS)</scope>
</reference>
<reference key="8">
    <citation type="journal article" date="2005" name="J. Mol. Biol.">
        <title>Binding of the respiratory chain inhibitor antimycin to the mitochondrial bc1 complex: a new crystal structure reveals an altered intramolecular hydrogen-bonding pattern.</title>
        <authorList>
            <person name="Huang L.S."/>
            <person name="Cobessi D."/>
            <person name="Tung E.Y."/>
            <person name="Berry E.A."/>
        </authorList>
    </citation>
    <scope>X-RAY CRYSTALLOGRAPHY (2.1 ANGSTROMS)</scope>
</reference>
<reference key="9">
    <citation type="journal article" date="2006" name="Proc. Natl. Acad. Sci. U.S.A.">
        <title>Surface-modulated motion switch: capture and release of iron-sulfur protein in the cytochrome bc1 complex.</title>
        <authorList>
            <person name="Esser L."/>
            <person name="Gong X."/>
            <person name="Yang S."/>
            <person name="Yu L."/>
            <person name="Yu C.A."/>
            <person name="Xia D."/>
        </authorList>
    </citation>
    <scope>X-RAY CRYSTALLOGRAPHY (2.26 ANGSTROMS)</scope>
</reference>
<reference key="10">
    <citation type="journal article" date="2016" name="Elife">
        <title>Functional asymmetry and electron flow in the bovine respirasome.</title>
        <authorList>
            <person name="Sousa J.S."/>
            <person name="Mills D.J."/>
            <person name="Vonck J."/>
            <person name="Kuehlbrandt W."/>
        </authorList>
    </citation>
    <scope>STRUCTURE BY ELECTRON MICROSCOPY (9.10 ANGSTROMS)</scope>
    <scope>SUBUNIT</scope>
</reference>